<keyword id="KW-0002">3D-structure</keyword>
<keyword id="KW-0997">Cell inner membrane</keyword>
<keyword id="KW-1003">Cell membrane</keyword>
<keyword id="KW-0145">Chemotaxis</keyword>
<keyword id="KW-0472">Membrane</keyword>
<keyword id="KW-0488">Methylation</keyword>
<keyword id="KW-1185">Reference proteome</keyword>
<keyword id="KW-0807">Transducer</keyword>
<keyword id="KW-0812">Transmembrane</keyword>
<keyword id="KW-1133">Transmembrane helix</keyword>
<dbReference type="EMBL" id="D50642">
    <property type="protein sequence ID" value="BAA09307.1"/>
    <property type="molecule type" value="Genomic_DNA"/>
</dbReference>
<dbReference type="EMBL" id="D86947">
    <property type="protein sequence ID" value="BAA23412.1"/>
    <property type="molecule type" value="Genomic_DNA"/>
</dbReference>
<dbReference type="EMBL" id="AE004091">
    <property type="protein sequence ID" value="AAG07697.1"/>
    <property type="molecule type" value="Genomic_DNA"/>
</dbReference>
<dbReference type="PIR" id="B83107">
    <property type="entry name" value="B83107"/>
</dbReference>
<dbReference type="RefSeq" id="NP_252999.1">
    <property type="nucleotide sequence ID" value="NC_002516.2"/>
</dbReference>
<dbReference type="RefSeq" id="WP_003148125.1">
    <property type="nucleotide sequence ID" value="NZ_JASSSD010000067.1"/>
</dbReference>
<dbReference type="PDB" id="5LTX">
    <property type="method" value="X-ray"/>
    <property type="resolution" value="2.02 A"/>
    <property type="chains" value="A/B=30-278"/>
</dbReference>
<dbReference type="PDB" id="5T65">
    <property type="method" value="X-ray"/>
    <property type="resolution" value="2.20 A"/>
    <property type="chains" value="A/B=30-278"/>
</dbReference>
<dbReference type="PDB" id="5T7M">
    <property type="method" value="X-ray"/>
    <property type="resolution" value="2.25 A"/>
    <property type="chains" value="A/B=30-278"/>
</dbReference>
<dbReference type="PDBsum" id="5LTX"/>
<dbReference type="PDBsum" id="5T65"/>
<dbReference type="PDBsum" id="5T7M"/>
<dbReference type="SMR" id="G3XD24"/>
<dbReference type="FunCoup" id="G3XD24">
    <property type="interactions" value="197"/>
</dbReference>
<dbReference type="STRING" id="208964.PA4309"/>
<dbReference type="PaxDb" id="208964-PA4309"/>
<dbReference type="GeneID" id="881565"/>
<dbReference type="KEGG" id="pae:PA4309"/>
<dbReference type="PATRIC" id="fig|208964.12.peg.4513"/>
<dbReference type="PseudoCAP" id="PA4309"/>
<dbReference type="HOGENOM" id="CLU_000445_107_19_6"/>
<dbReference type="InParanoid" id="G3XD24"/>
<dbReference type="OrthoDB" id="7021108at2"/>
<dbReference type="PhylomeDB" id="G3XD24"/>
<dbReference type="BioCyc" id="PAER208964:G1FZ6-4393-MONOMER"/>
<dbReference type="Proteomes" id="UP000002438">
    <property type="component" value="Chromosome"/>
</dbReference>
<dbReference type="GO" id="GO:0005886">
    <property type="term" value="C:plasma membrane"/>
    <property type="evidence" value="ECO:0007669"/>
    <property type="project" value="UniProtKB-SubCell"/>
</dbReference>
<dbReference type="GO" id="GO:0016597">
    <property type="term" value="F:amino acid binding"/>
    <property type="evidence" value="ECO:0000314"/>
    <property type="project" value="PseudoCAP"/>
</dbReference>
<dbReference type="GO" id="GO:0004888">
    <property type="term" value="F:transmembrane signaling receptor activity"/>
    <property type="evidence" value="ECO:0007669"/>
    <property type="project" value="InterPro"/>
</dbReference>
<dbReference type="GO" id="GO:0006935">
    <property type="term" value="P:chemotaxis"/>
    <property type="evidence" value="ECO:0000315"/>
    <property type="project" value="PseudoCAP"/>
</dbReference>
<dbReference type="GO" id="GO:0043200">
    <property type="term" value="P:response to amino acid"/>
    <property type="evidence" value="ECO:0000315"/>
    <property type="project" value="PseudoCAP"/>
</dbReference>
<dbReference type="GO" id="GO:0007165">
    <property type="term" value="P:signal transduction"/>
    <property type="evidence" value="ECO:0007669"/>
    <property type="project" value="UniProtKB-KW"/>
</dbReference>
<dbReference type="CDD" id="cd06225">
    <property type="entry name" value="HAMP"/>
    <property type="match status" value="1"/>
</dbReference>
<dbReference type="CDD" id="cd11386">
    <property type="entry name" value="MCP_signal"/>
    <property type="match status" value="1"/>
</dbReference>
<dbReference type="CDD" id="cd12913">
    <property type="entry name" value="PDC1_MCP_like"/>
    <property type="match status" value="1"/>
</dbReference>
<dbReference type="CDD" id="cd12912">
    <property type="entry name" value="PDC2_MCP_like"/>
    <property type="match status" value="1"/>
</dbReference>
<dbReference type="FunFam" id="3.30.450.20:FF:000048">
    <property type="entry name" value="Methyl-accepting chemotaxis protein"/>
    <property type="match status" value="1"/>
</dbReference>
<dbReference type="FunFam" id="3.30.450.20:FF:000132">
    <property type="entry name" value="Methyl-accepting chemotaxis protein PctA"/>
    <property type="match status" value="1"/>
</dbReference>
<dbReference type="FunFam" id="1.10.287.950:FF:000001">
    <property type="entry name" value="Methyl-accepting chemotaxis sensory transducer"/>
    <property type="match status" value="1"/>
</dbReference>
<dbReference type="Gene3D" id="1.10.287.950">
    <property type="entry name" value="Methyl-accepting chemotaxis protein"/>
    <property type="match status" value="1"/>
</dbReference>
<dbReference type="Gene3D" id="3.30.450.20">
    <property type="entry name" value="PAS domain"/>
    <property type="match status" value="2"/>
</dbReference>
<dbReference type="InterPro" id="IPR004090">
    <property type="entry name" value="Chemotax_Me-accpt_rcpt"/>
</dbReference>
<dbReference type="InterPro" id="IPR033479">
    <property type="entry name" value="dCache_1"/>
</dbReference>
<dbReference type="InterPro" id="IPR003660">
    <property type="entry name" value="HAMP_dom"/>
</dbReference>
<dbReference type="InterPro" id="IPR004089">
    <property type="entry name" value="MCPsignal_dom"/>
</dbReference>
<dbReference type="InterPro" id="IPR029151">
    <property type="entry name" value="Sensor-like_sf"/>
</dbReference>
<dbReference type="InterPro" id="IPR000727">
    <property type="entry name" value="T_SNARE_dom"/>
</dbReference>
<dbReference type="PANTHER" id="PTHR32089:SF39">
    <property type="entry name" value="METHYL-ACCEPTING CHEMOTAXIS PROTEIN HLYB"/>
    <property type="match status" value="1"/>
</dbReference>
<dbReference type="PANTHER" id="PTHR32089">
    <property type="entry name" value="METHYL-ACCEPTING CHEMOTAXIS PROTEIN MCPB"/>
    <property type="match status" value="1"/>
</dbReference>
<dbReference type="Pfam" id="PF02743">
    <property type="entry name" value="dCache_1"/>
    <property type="match status" value="1"/>
</dbReference>
<dbReference type="Pfam" id="PF00672">
    <property type="entry name" value="HAMP"/>
    <property type="match status" value="1"/>
</dbReference>
<dbReference type="Pfam" id="PF00015">
    <property type="entry name" value="MCPsignal"/>
    <property type="match status" value="1"/>
</dbReference>
<dbReference type="PRINTS" id="PR00260">
    <property type="entry name" value="CHEMTRNSDUCR"/>
</dbReference>
<dbReference type="SMART" id="SM00304">
    <property type="entry name" value="HAMP"/>
    <property type="match status" value="2"/>
</dbReference>
<dbReference type="SMART" id="SM00283">
    <property type="entry name" value="MA"/>
    <property type="match status" value="1"/>
</dbReference>
<dbReference type="SUPFAM" id="SSF58104">
    <property type="entry name" value="Methyl-accepting chemotaxis protein (MCP) signaling domain"/>
    <property type="match status" value="1"/>
</dbReference>
<dbReference type="SUPFAM" id="SSF103190">
    <property type="entry name" value="Sensory domain-like"/>
    <property type="match status" value="1"/>
</dbReference>
<dbReference type="PROSITE" id="PS50111">
    <property type="entry name" value="CHEMOTAXIS_TRANSDUC_2"/>
    <property type="match status" value="1"/>
</dbReference>
<dbReference type="PROSITE" id="PS50885">
    <property type="entry name" value="HAMP"/>
    <property type="match status" value="1"/>
</dbReference>
<name>PCTA_PSEAE</name>
<comment type="function">
    <text evidence="5 6 8 10 11 12">Chemotactic-signal transducers respond to changes in the concentration of attractants and repellents in the environment, transduce a signal from the outside to the inside of the cell, and facilitate sensory adaptation through the variation of the level of methylation. Major receptor that responds to all naturally occurring L-amino acids, except L-Gln and L-Asp. Also involved in repellent responses to trichloroethylene (TCE), chloroform and methylthiocyanate (PubMed:16233808, PubMed:23650915, PubMed:8522505, PubMed:9353923). Also mediates chemotaxis to histamine, but does not bind histamine (PubMed:30425146). In addition, binds the quorum-sensing signal autoinducer 2 (AI-2), thus inducing chemotaxis toward AI-2 and biofilm formation (PubMed:33097715).</text>
</comment>
<comment type="subunit">
    <text evidence="6">Monomer in the absence and presence of ligands.</text>
</comment>
<comment type="subcellular location">
    <subcellularLocation>
        <location evidence="13">Cell inner membrane</location>
        <topology evidence="1">Multi-pass membrane protein</topology>
    </subcellularLocation>
</comment>
<comment type="domain">
    <text evidence="6">The ligand binding region binds directly to 17 L-amino acids.</text>
</comment>
<comment type="disruption phenotype">
    <text evidence="5 7 8 10 11 12">Mutant is defective in taxis toward 17 amino acids, including Gly, L-Ser, L-Thr and L-Val. Mutant also shows decreased chemotactic responses to TCE, chloroform and methylthiocyanate (PubMed:16233808, PubMed:8522505, PubMed:9353923). Deletion of pctA, pctB and pctC abolishes chemotaxis to 5 mM histamine, but significant chemotaxis is observed at a concentration range between 500 nM and 500 uM (PubMed:30425146). The pctABC-tlpQ deletion mutant is devoid of histamine chemotaxis over the entire concentration range (50 nM to 50 mM) (PubMed:30425146). Deletion of the gene significantly reduces chemotaxis to AI-2 (PubMed:33097715). The deletion mutant does not show significant reduction in swarming or immobilization near epithelial wounds, but the pctABC triple deletion mutant shows a significant reduction in chemotaxis and immobilization along wounds of human cystic fibrosis airway epithelial cells (PubMed:27031335).</text>
</comment>
<comment type="miscellaneous">
    <text evidence="14">PctA has a broad ligand range and responds to most of the proteinogenic amino acids, whereas PctB and PctC have a much narrower range and show strong ligand preference for L-glutamine and gamma-aminobutyrate, respectively. These receptors are paralogs: pctA gene duplication in the common ancestor of the genus Pseudomonas led to pctC, whereas pctB originated through another, independent pctA duplication.</text>
</comment>
<comment type="similarity">
    <text evidence="13">Belongs to the methyl-accepting chemotaxis (MCP) protein family.</text>
</comment>
<protein>
    <recommendedName>
        <fullName>Methyl-accepting chemotaxis protein PctA</fullName>
    </recommendedName>
</protein>
<accession>G3XD24</accession>
<accession>O32442</accession>
<accession>Q51509</accession>
<accession>Q7DC77</accession>
<reference key="1">
    <citation type="journal article" date="1995" name="J. Bacteriol.">
        <title>Molecular cloning and characterization of a chemotactic transducer gene in Pseudomonas aeruginosa.</title>
        <authorList>
            <person name="Kuroda A."/>
            <person name="Kumano T."/>
            <person name="Taguchi K."/>
            <person name="Nikata T."/>
            <person name="Kato J."/>
            <person name="Ohtake H."/>
        </authorList>
    </citation>
    <scope>NUCLEOTIDE SEQUENCE [GENOMIC DNA]</scope>
    <scope>FUNCTION</scope>
    <scope>DISRUPTION PHENOTYPE</scope>
    <source>
        <strain>ATCC 15692 / DSM 22644 / CIP 104116 / JCM 14847 / LMG 12228 / 1C / PRS 101 / PAO1</strain>
    </source>
</reference>
<reference key="2">
    <citation type="journal article" date="1997" name="Microbiology">
        <title>Genetic identification of chemotactic transducers for amino acids in Pseudomonas aeruginosa.</title>
        <authorList>
            <person name="Taguchi K."/>
            <person name="Fukutomi H."/>
            <person name="Kuroda A."/>
            <person name="Kato J."/>
            <person name="Ohtake H."/>
        </authorList>
    </citation>
    <scope>NUCLEOTIDE SEQUENCE [GENOMIC DNA]</scope>
    <scope>FUNCTION</scope>
    <scope>DISRUPTION PHENOTYPE</scope>
    <source>
        <strain>ATCC 15692 / DSM 22644 / CIP 104116 / JCM 14847 / LMG 12228 / 1C / PRS 101 / PAO1</strain>
    </source>
</reference>
<reference key="3">
    <citation type="journal article" date="2000" name="Nature">
        <title>Complete genome sequence of Pseudomonas aeruginosa PAO1, an opportunistic pathogen.</title>
        <authorList>
            <person name="Stover C.K."/>
            <person name="Pham X.-Q.T."/>
            <person name="Erwin A.L."/>
            <person name="Mizoguchi S.D."/>
            <person name="Warrener P."/>
            <person name="Hickey M.J."/>
            <person name="Brinkman F.S.L."/>
            <person name="Hufnagle W.O."/>
            <person name="Kowalik D.J."/>
            <person name="Lagrou M."/>
            <person name="Garber R.L."/>
            <person name="Goltry L."/>
            <person name="Tolentino E."/>
            <person name="Westbrock-Wadman S."/>
            <person name="Yuan Y."/>
            <person name="Brody L.L."/>
            <person name="Coulter S.N."/>
            <person name="Folger K.R."/>
            <person name="Kas A."/>
            <person name="Larbig K."/>
            <person name="Lim R.M."/>
            <person name="Smith K.A."/>
            <person name="Spencer D.H."/>
            <person name="Wong G.K.-S."/>
            <person name="Wu Z."/>
            <person name="Paulsen I.T."/>
            <person name="Reizer J."/>
            <person name="Saier M.H. Jr."/>
            <person name="Hancock R.E.W."/>
            <person name="Lory S."/>
            <person name="Olson M.V."/>
        </authorList>
    </citation>
    <scope>NUCLEOTIDE SEQUENCE [LARGE SCALE GENOMIC DNA]</scope>
    <source>
        <strain>ATCC 15692 / DSM 22644 / CIP 104116 / JCM 14847 / LMG 12228 / 1C / PRS 101 / PAO1</strain>
    </source>
</reference>
<reference key="4">
    <citation type="journal article" date="2005" name="J. Biosci. Bioeng.">
        <title>Identification of chemosensory proteins for trichloroethylene in Pseudomonas aeruginosa.</title>
        <authorList>
            <person name="Shitashiro M."/>
            <person name="Tanaka H."/>
            <person name="Hong C.S."/>
            <person name="Kuroda A."/>
            <person name="Takiguchi N."/>
            <person name="Ohtake H."/>
            <person name="Kato J."/>
        </authorList>
    </citation>
    <scope>FUNCTION IN REPELLENT RESPONSES</scope>
    <scope>DISRUPTION PHENOTYPE</scope>
    <source>
        <strain>ATCC 15692 / DSM 22644 / CIP 104116 / JCM 14847 / LMG 12228 / 1C / PRS 101 / PAO1</strain>
    </source>
</reference>
<reference key="5">
    <citation type="journal article" date="2013" name="Mol. Microbiol.">
        <title>Paralogous chemoreceptors mediate chemotaxis towards protein amino acids and the non-protein amino acid gamma-aminobutyrate (GABA).</title>
        <authorList>
            <person name="Rico-Jimenez M."/>
            <person name="Munoz-Martinez F."/>
            <person name="Garcia-Fontana C."/>
            <person name="Fernandez M."/>
            <person name="Morel B."/>
            <person name="Ortega A."/>
            <person name="Ramos J.L."/>
            <person name="Krell T."/>
        </authorList>
    </citation>
    <scope>FUNCTION</scope>
    <scope>SUBUNIT</scope>
    <scope>DOMAIN</scope>
    <scope>MUTAGENESIS OF ARG-126; TRP-128; TYR-144; ASP-146 AND ASP-173</scope>
    <source>
        <strain>ATCC 15692 / DSM 22644 / CIP 104116 / JCM 14847 / LMG 12228 / 1C / PRS 101 / PAO1</strain>
    </source>
</reference>
<reference key="6">
    <citation type="journal article" date="2016" name="PLoS ONE">
        <title>Chemotaxis and binding of Pseudomonas aeruginosa to scratch-wounded human cystic fibrosis airway epithelial cells.</title>
        <authorList>
            <person name="Schwarzer C."/>
            <person name="Fischer H."/>
            <person name="Machen T.E."/>
        </authorList>
    </citation>
    <scope>DISRUPTION PHENOTYPE</scope>
    <source>
        <strain>ATCC 15692 / DSM 22644 / CIP 104116 / JCM 14847 / LMG 12228 / 1C / PRS 101 / PAO1</strain>
    </source>
</reference>
<reference key="7">
    <citation type="journal article" date="2018" name="MBio">
        <title>High-affinity chemotaxis to histamine mediated by the TlpQ chemoreceptor of the human pathogen Pseudomonas aeruginosa.</title>
        <authorList>
            <person name="Corral-Lugo A."/>
            <person name="Matilla M.A."/>
            <person name="Martin-Mora D."/>
            <person name="Silva Jimenez H."/>
            <person name="Mesa Torres N."/>
            <person name="Kato J."/>
            <person name="Hida A."/>
            <person name="Oku S."/>
            <person name="Conejero-Muriel M."/>
            <person name="Gavira J.A."/>
            <person name="Krell T."/>
        </authorList>
    </citation>
    <scope>FUNCTION</scope>
    <scope>DISRUPTION PHENOTYPE</scope>
    <source>
        <strain>ATCC 15692 / DSM 22644 / CIP 104116 / JCM 14847 / LMG 12228 / 1C / PRS 101 / PAO1</strain>
    </source>
</reference>
<reference key="8">
    <citation type="journal article" date="2020" name="Nat. Commun.">
        <title>Sensing of autoinducer-2 by functionally distinct receptors in prokaryotes.</title>
        <authorList>
            <person name="Zhang L."/>
            <person name="Li S."/>
            <person name="Liu X."/>
            <person name="Wang Z."/>
            <person name="Jiang M."/>
            <person name="Wang R."/>
            <person name="Xie L."/>
            <person name="Liu Q."/>
            <person name="Xie X."/>
            <person name="Shang D."/>
            <person name="Li M."/>
            <person name="Wei Z."/>
            <person name="Wang Y."/>
            <person name="Fan C."/>
            <person name="Luo Z.Q."/>
            <person name="Shen X."/>
        </authorList>
    </citation>
    <scope>FUNCTION IN RESPONSE TO AI-2</scope>
    <scope>DISRUPTION PHENOTYPE</scope>
    <scope>MUTAGENESIS OF TYR-101; MET-111; TYR-121; ARG-126; TRP-128; TYR-144; ASP-146; ALA-147 AND ASP-173</scope>
    <source>
        <strain>ATCC 15692 / DSM 22644 / CIP 104116 / JCM 14847 / LMG 12228 / 1C / PRS 101 / PAO1</strain>
    </source>
</reference>
<reference evidence="18 19 20" key="9">
    <citation type="journal article" date="2020" name="MBio">
        <title>How bacterial chemoreceptors evolve novel ligand specificities.</title>
        <authorList>
            <person name="Gavira J.A."/>
            <person name="Gumerov V.M."/>
            <person name="Rico-Jimenez M."/>
            <person name="Petukh M."/>
            <person name="Upadhyay A.A."/>
            <person name="Ortega A."/>
            <person name="Matilla M.A."/>
            <person name="Zhulin I.B."/>
            <person name="Krell T."/>
        </authorList>
    </citation>
    <scope>X-RAY CRYSTALLOGRAPHY (2.02 ANGSTROMS) OF 30-278 IN COMPLEXES WITH METHIONINE; ISOLEUCINE AND TRYPTOPHAN</scope>
    <scope>MOLECULAR EVOLUTION</scope>
    <source>
        <strain>ATCC 15692 / DSM 22644 / CIP 104116 / JCM 14847 / LMG 12228 / 1C / PRS 101 / PAO1</strain>
    </source>
</reference>
<feature type="chain" id="PRO_0000424849" description="Methyl-accepting chemotaxis protein PctA">
    <location>
        <begin position="1"/>
        <end position="629"/>
    </location>
</feature>
<feature type="topological domain" description="Cytoplasmic" evidence="1">
    <location>
        <begin position="1"/>
        <end position="10"/>
    </location>
</feature>
<feature type="transmembrane region" description="Helical" evidence="1">
    <location>
        <begin position="11"/>
        <end position="31"/>
    </location>
</feature>
<feature type="topological domain" description="Periplasmic" evidence="1">
    <location>
        <begin position="32"/>
        <end position="276"/>
    </location>
</feature>
<feature type="transmembrane region" description="Helical" evidence="1">
    <location>
        <begin position="277"/>
        <end position="297"/>
    </location>
</feature>
<feature type="topological domain" description="Cytoplasmic" evidence="1">
    <location>
        <begin position="298"/>
        <end position="629"/>
    </location>
</feature>
<feature type="domain" description="Cache" evidence="1">
    <location>
        <begin position="36"/>
        <end position="259"/>
    </location>
</feature>
<feature type="domain" description="HAMP" evidence="2">
    <location>
        <begin position="298"/>
        <end position="352"/>
    </location>
</feature>
<feature type="domain" description="Methyl-accepting transducer" evidence="3">
    <location>
        <begin position="357"/>
        <end position="593"/>
    </location>
</feature>
<feature type="region of interest" description="Disordered" evidence="4">
    <location>
        <begin position="405"/>
        <end position="424"/>
    </location>
</feature>
<feature type="compositionally biased region" description="Basic and acidic residues" evidence="4">
    <location>
        <begin position="410"/>
        <end position="424"/>
    </location>
</feature>
<feature type="binding site" evidence="9 16">
    <location>
        <position position="121"/>
    </location>
    <ligand>
        <name>L-isoleucine</name>
        <dbReference type="ChEBI" id="CHEBI:58045"/>
    </ligand>
</feature>
<feature type="binding site" evidence="9 15">
    <location>
        <position position="121"/>
    </location>
    <ligand>
        <name>L-methionine</name>
        <dbReference type="ChEBI" id="CHEBI:57844"/>
    </ligand>
</feature>
<feature type="binding site" evidence="9 17">
    <location>
        <position position="121"/>
    </location>
    <ligand>
        <name>L-tryptophan</name>
        <dbReference type="ChEBI" id="CHEBI:57912"/>
    </ligand>
</feature>
<feature type="binding site" evidence="9 16">
    <location>
        <begin position="126"/>
        <end position="128"/>
    </location>
    <ligand>
        <name>L-isoleucine</name>
        <dbReference type="ChEBI" id="CHEBI:58045"/>
    </ligand>
</feature>
<feature type="binding site" evidence="9 15">
    <location>
        <begin position="126"/>
        <end position="128"/>
    </location>
    <ligand>
        <name>L-methionine</name>
        <dbReference type="ChEBI" id="CHEBI:57844"/>
    </ligand>
</feature>
<feature type="binding site" evidence="9 17">
    <location>
        <begin position="126"/>
        <end position="128"/>
    </location>
    <ligand>
        <name>L-tryptophan</name>
        <dbReference type="ChEBI" id="CHEBI:57912"/>
    </ligand>
</feature>
<feature type="binding site" evidence="9 16">
    <location>
        <begin position="144"/>
        <end position="147"/>
    </location>
    <ligand>
        <name>L-isoleucine</name>
        <dbReference type="ChEBI" id="CHEBI:58045"/>
    </ligand>
</feature>
<feature type="binding site" evidence="9 15">
    <location>
        <begin position="144"/>
        <end position="147"/>
    </location>
    <ligand>
        <name>L-methionine</name>
        <dbReference type="ChEBI" id="CHEBI:57844"/>
    </ligand>
</feature>
<feature type="binding site" evidence="9 17">
    <location>
        <begin position="144"/>
        <end position="147"/>
    </location>
    <ligand>
        <name>L-tryptophan</name>
        <dbReference type="ChEBI" id="CHEBI:57912"/>
    </ligand>
</feature>
<feature type="binding site" evidence="9 16">
    <location>
        <position position="173"/>
    </location>
    <ligand>
        <name>L-isoleucine</name>
        <dbReference type="ChEBI" id="CHEBI:58045"/>
    </ligand>
</feature>
<feature type="binding site" evidence="9 15">
    <location>
        <position position="173"/>
    </location>
    <ligand>
        <name>L-methionine</name>
        <dbReference type="ChEBI" id="CHEBI:57844"/>
    </ligand>
</feature>
<feature type="binding site" evidence="9 17">
    <location>
        <position position="173"/>
    </location>
    <ligand>
        <name>L-tryptophan</name>
        <dbReference type="ChEBI" id="CHEBI:57912"/>
    </ligand>
</feature>
<feature type="mutagenesis site" description="260-fold reduction in AI-2 binding affinity." evidence="10">
    <original>Y</original>
    <variation>A</variation>
    <location>
        <position position="101"/>
    </location>
</feature>
<feature type="mutagenesis site" description="120-fold reduction in AI-2 binding affinity." evidence="10">
    <original>M</original>
    <variation>A</variation>
    <location>
        <position position="111"/>
    </location>
</feature>
<feature type="mutagenesis site" description="150-fold reduction in AI-2 binding affinity." evidence="10">
    <original>Y</original>
    <variation>A</variation>
    <location>
        <position position="121"/>
    </location>
</feature>
<feature type="mutagenesis site" description="Fails to recognize L-Ala, L-Arg, L-Thr, L-Trp and L-Pro. 290-fold reduction in AI-2 binding affinity." evidence="6 10">
    <original>R</original>
    <variation>A</variation>
    <location>
        <position position="126"/>
    </location>
</feature>
<feature type="mutagenesis site" description="Fails to recognize L-Trp. Decreases affinity for L-Ala, L-Arg, L-Thr and L-Pro. 160-fold reduction in AI-2 binding affinity." evidence="6 10">
    <original>W</original>
    <variation>A</variation>
    <location>
        <position position="128"/>
    </location>
</feature>
<feature type="mutagenesis site" description="Binds L-Trp, but not L-Ala, L-Arg, L-Thr and L-Pro. 100-fold reduction in AI-2 binding affinity." evidence="6 10">
    <original>Y</original>
    <variation>A</variation>
    <location>
        <position position="144"/>
    </location>
</feature>
<feature type="mutagenesis site" description="Fails to recognize L-Ala, L-Arg, L-Thr, L-Trp and L-Pro. 240-fold reduction in AI-2 binding affinity." evidence="6 10">
    <original>D</original>
    <variation>A</variation>
    <location>
        <position position="146"/>
    </location>
</feature>
<feature type="mutagenesis site" description="80-fold reduction in AI-2 binding affinity." evidence="10">
    <original>A</original>
    <variation>F</variation>
    <location>
        <position position="147"/>
    </location>
</feature>
<feature type="mutagenesis site" description="Binds L-Trp, but not L-Ala, L-Arg, L-Thr and L-Pro. 85-fold reduction in AI-2 binding affinity." evidence="6 10">
    <original>D</original>
    <variation>A</variation>
    <location>
        <position position="173"/>
    </location>
</feature>
<feature type="sequence conflict" description="In Ref. 2; BAA23412." evidence="13" ref="2">
    <original>SV</original>
    <variation>VL</variation>
    <location>
        <begin position="570"/>
        <end position="571"/>
    </location>
</feature>
<feature type="helix" evidence="21">
    <location>
        <begin position="31"/>
        <end position="77"/>
    </location>
</feature>
<feature type="helix" evidence="21">
    <location>
        <begin position="81"/>
        <end position="88"/>
    </location>
</feature>
<feature type="helix" evidence="21">
    <location>
        <begin position="91"/>
        <end position="94"/>
    </location>
</feature>
<feature type="strand" evidence="21">
    <location>
        <begin position="100"/>
        <end position="104"/>
    </location>
</feature>
<feature type="strand" evidence="21">
    <location>
        <begin position="109"/>
        <end position="113"/>
    </location>
</feature>
<feature type="helix" evidence="21">
    <location>
        <begin position="123"/>
        <end position="125"/>
    </location>
</feature>
<feature type="helix" evidence="21">
    <location>
        <begin position="127"/>
        <end position="135"/>
    </location>
</feature>
<feature type="turn" evidence="21">
    <location>
        <begin position="147"/>
        <end position="149"/>
    </location>
</feature>
<feature type="strand" evidence="21">
    <location>
        <begin position="151"/>
        <end position="162"/>
    </location>
</feature>
<feature type="strand" evidence="21">
    <location>
        <begin position="165"/>
        <end position="174"/>
    </location>
</feature>
<feature type="helix" evidence="21">
    <location>
        <begin position="176"/>
        <end position="183"/>
    </location>
</feature>
<feature type="helix" evidence="21">
    <location>
        <begin position="188"/>
        <end position="190"/>
    </location>
</feature>
<feature type="strand" evidence="21">
    <location>
        <begin position="192"/>
        <end position="198"/>
    </location>
</feature>
<feature type="strand" evidence="21">
    <location>
        <begin position="201"/>
        <end position="205"/>
    </location>
</feature>
<feature type="helix" evidence="21">
    <location>
        <begin position="209"/>
        <end position="211"/>
    </location>
</feature>
<feature type="helix" evidence="21">
    <location>
        <begin position="216"/>
        <end position="219"/>
    </location>
</feature>
<feature type="strand" evidence="21">
    <location>
        <begin position="220"/>
        <end position="223"/>
    </location>
</feature>
<feature type="strand" evidence="21">
    <location>
        <begin position="227"/>
        <end position="236"/>
    </location>
</feature>
<feature type="strand" evidence="21">
    <location>
        <begin position="239"/>
        <end position="247"/>
    </location>
</feature>
<feature type="strand" evidence="21">
    <location>
        <begin position="256"/>
        <end position="263"/>
    </location>
</feature>
<feature type="helix" evidence="21">
    <location>
        <begin position="264"/>
        <end position="270"/>
    </location>
</feature>
<proteinExistence type="evidence at protein level"/>
<organism>
    <name type="scientific">Pseudomonas aeruginosa (strain ATCC 15692 / DSM 22644 / CIP 104116 / JCM 14847 / LMG 12228 / 1C / PRS 101 / PAO1)</name>
    <dbReference type="NCBI Taxonomy" id="208964"/>
    <lineage>
        <taxon>Bacteria</taxon>
        <taxon>Pseudomonadati</taxon>
        <taxon>Pseudomonadota</taxon>
        <taxon>Gammaproteobacteria</taxon>
        <taxon>Pseudomonadales</taxon>
        <taxon>Pseudomonadaceae</taxon>
        <taxon>Pseudomonas</taxon>
    </lineage>
</organism>
<evidence type="ECO:0000255" key="1"/>
<evidence type="ECO:0000255" key="2">
    <source>
        <dbReference type="PROSITE-ProRule" id="PRU00102"/>
    </source>
</evidence>
<evidence type="ECO:0000255" key="3">
    <source>
        <dbReference type="PROSITE-ProRule" id="PRU00284"/>
    </source>
</evidence>
<evidence type="ECO:0000256" key="4">
    <source>
        <dbReference type="SAM" id="MobiDB-lite"/>
    </source>
</evidence>
<evidence type="ECO:0000269" key="5">
    <source>
    </source>
</evidence>
<evidence type="ECO:0000269" key="6">
    <source>
    </source>
</evidence>
<evidence type="ECO:0000269" key="7">
    <source>
    </source>
</evidence>
<evidence type="ECO:0000269" key="8">
    <source>
    </source>
</evidence>
<evidence type="ECO:0000269" key="9">
    <source>
    </source>
</evidence>
<evidence type="ECO:0000269" key="10">
    <source>
    </source>
</evidence>
<evidence type="ECO:0000269" key="11">
    <source>
    </source>
</evidence>
<evidence type="ECO:0000269" key="12">
    <source>
    </source>
</evidence>
<evidence type="ECO:0000305" key="13"/>
<evidence type="ECO:0000305" key="14">
    <source>
    </source>
</evidence>
<evidence type="ECO:0000312" key="15">
    <source>
        <dbReference type="PDB" id="5LTX"/>
    </source>
</evidence>
<evidence type="ECO:0000312" key="16">
    <source>
        <dbReference type="PDB" id="5T65"/>
    </source>
</evidence>
<evidence type="ECO:0000312" key="17">
    <source>
        <dbReference type="PDB" id="5T7M"/>
    </source>
</evidence>
<evidence type="ECO:0007744" key="18">
    <source>
        <dbReference type="PDB" id="5LTX"/>
    </source>
</evidence>
<evidence type="ECO:0007744" key="19">
    <source>
        <dbReference type="PDB" id="5T65"/>
    </source>
</evidence>
<evidence type="ECO:0007744" key="20">
    <source>
        <dbReference type="PDB" id="5T7M"/>
    </source>
</evidence>
<evidence type="ECO:0007829" key="21">
    <source>
        <dbReference type="PDB" id="5LTX"/>
    </source>
</evidence>
<gene>
    <name type="primary">pctA</name>
    <name type="ordered locus">PA4309</name>
</gene>
<sequence>MIKSLKFSHKILLAASLVVFAAFALFTLYNDYLQRNAIREDLESYLREMGDVTSSNIQNWLGGRLLLVEQTAQTLARDHSPETVSALLEQPALTSTFSFTYLGQQDGVFTMRPDSPMPAGYDPRSRPWYKDAVAAGGLTLTEPYVDAATQELIITAATPVKAAGNTLGVVGGDLSLKTLVQIINSLDFSGMGYAFLVSGDGKILVHPDKEQVMKTLSEVYPQNTPKIATGFSEAELHGHTRILAFTPIKGLPSVTWYLALSIDKDKAYAMLSKFRVSAIAAALISIVAILVLLGLLIRLLMQPLHLMGRAMQDIAQGEGDLTKRLAVTSRDEFGVLGDAFNQFVERIHRSIREVAGTAHKLHDVSQLVVNASNSSMANSDEQSNRTNSVAAAINELGAAAQEIARNAADASHHASDANHQAEDGKQVVEQTIRAMNELSEKISASCANIEALNSRTVNIGQILEVIKGISEQTNLLALNAAIEAARAGEAGRGFAVVADEVRNLAHRAQESAQQIQKMIEELQVGAREAVATMTESQRYSLESVEIANRAGESLSSVTRRIGEIDGMNQSVATATEEQTAVVDSLNMDITEINTLNQEGVENLQATLRACGELETQAGRLRQLVDSFKI</sequence>